<name>ENO_PELPB</name>
<proteinExistence type="inferred from homology"/>
<dbReference type="EC" id="4.2.1.11" evidence="1"/>
<dbReference type="EMBL" id="CP001110">
    <property type="protein sequence ID" value="ACF44848.1"/>
    <property type="molecule type" value="Genomic_DNA"/>
</dbReference>
<dbReference type="RefSeq" id="WP_012509320.1">
    <property type="nucleotide sequence ID" value="NC_011060.1"/>
</dbReference>
<dbReference type="SMR" id="B4SGB2"/>
<dbReference type="STRING" id="324925.Ppha_2689"/>
<dbReference type="KEGG" id="pph:Ppha_2689"/>
<dbReference type="eggNOG" id="COG0148">
    <property type="taxonomic scope" value="Bacteria"/>
</dbReference>
<dbReference type="HOGENOM" id="CLU_031223_2_1_10"/>
<dbReference type="OrthoDB" id="9804716at2"/>
<dbReference type="UniPathway" id="UPA00109">
    <property type="reaction ID" value="UER00187"/>
</dbReference>
<dbReference type="Proteomes" id="UP000002724">
    <property type="component" value="Chromosome"/>
</dbReference>
<dbReference type="GO" id="GO:0009986">
    <property type="term" value="C:cell surface"/>
    <property type="evidence" value="ECO:0007669"/>
    <property type="project" value="UniProtKB-SubCell"/>
</dbReference>
<dbReference type="GO" id="GO:0005576">
    <property type="term" value="C:extracellular region"/>
    <property type="evidence" value="ECO:0007669"/>
    <property type="project" value="UniProtKB-SubCell"/>
</dbReference>
<dbReference type="GO" id="GO:0000015">
    <property type="term" value="C:phosphopyruvate hydratase complex"/>
    <property type="evidence" value="ECO:0007669"/>
    <property type="project" value="InterPro"/>
</dbReference>
<dbReference type="GO" id="GO:0000287">
    <property type="term" value="F:magnesium ion binding"/>
    <property type="evidence" value="ECO:0007669"/>
    <property type="project" value="UniProtKB-UniRule"/>
</dbReference>
<dbReference type="GO" id="GO:0004634">
    <property type="term" value="F:phosphopyruvate hydratase activity"/>
    <property type="evidence" value="ECO:0007669"/>
    <property type="project" value="UniProtKB-UniRule"/>
</dbReference>
<dbReference type="GO" id="GO:0006096">
    <property type="term" value="P:glycolytic process"/>
    <property type="evidence" value="ECO:0007669"/>
    <property type="project" value="UniProtKB-UniRule"/>
</dbReference>
<dbReference type="CDD" id="cd03313">
    <property type="entry name" value="enolase"/>
    <property type="match status" value="1"/>
</dbReference>
<dbReference type="FunFam" id="3.20.20.120:FF:000001">
    <property type="entry name" value="Enolase"/>
    <property type="match status" value="1"/>
</dbReference>
<dbReference type="FunFam" id="3.30.390.10:FF:000001">
    <property type="entry name" value="Enolase"/>
    <property type="match status" value="1"/>
</dbReference>
<dbReference type="Gene3D" id="3.20.20.120">
    <property type="entry name" value="Enolase-like C-terminal domain"/>
    <property type="match status" value="1"/>
</dbReference>
<dbReference type="Gene3D" id="3.30.390.10">
    <property type="entry name" value="Enolase-like, N-terminal domain"/>
    <property type="match status" value="1"/>
</dbReference>
<dbReference type="HAMAP" id="MF_00318">
    <property type="entry name" value="Enolase"/>
    <property type="match status" value="1"/>
</dbReference>
<dbReference type="InterPro" id="IPR000941">
    <property type="entry name" value="Enolase"/>
</dbReference>
<dbReference type="InterPro" id="IPR036849">
    <property type="entry name" value="Enolase-like_C_sf"/>
</dbReference>
<dbReference type="InterPro" id="IPR029017">
    <property type="entry name" value="Enolase-like_N"/>
</dbReference>
<dbReference type="InterPro" id="IPR020810">
    <property type="entry name" value="Enolase_C"/>
</dbReference>
<dbReference type="InterPro" id="IPR020809">
    <property type="entry name" value="Enolase_CS"/>
</dbReference>
<dbReference type="InterPro" id="IPR020811">
    <property type="entry name" value="Enolase_N"/>
</dbReference>
<dbReference type="NCBIfam" id="TIGR01060">
    <property type="entry name" value="eno"/>
    <property type="match status" value="1"/>
</dbReference>
<dbReference type="PANTHER" id="PTHR11902">
    <property type="entry name" value="ENOLASE"/>
    <property type="match status" value="1"/>
</dbReference>
<dbReference type="PANTHER" id="PTHR11902:SF1">
    <property type="entry name" value="ENOLASE"/>
    <property type="match status" value="1"/>
</dbReference>
<dbReference type="Pfam" id="PF00113">
    <property type="entry name" value="Enolase_C"/>
    <property type="match status" value="1"/>
</dbReference>
<dbReference type="Pfam" id="PF03952">
    <property type="entry name" value="Enolase_N"/>
    <property type="match status" value="1"/>
</dbReference>
<dbReference type="PIRSF" id="PIRSF001400">
    <property type="entry name" value="Enolase"/>
    <property type="match status" value="1"/>
</dbReference>
<dbReference type="PRINTS" id="PR00148">
    <property type="entry name" value="ENOLASE"/>
</dbReference>
<dbReference type="SFLD" id="SFLDS00001">
    <property type="entry name" value="Enolase"/>
    <property type="match status" value="1"/>
</dbReference>
<dbReference type="SFLD" id="SFLDF00002">
    <property type="entry name" value="enolase"/>
    <property type="match status" value="1"/>
</dbReference>
<dbReference type="SMART" id="SM01192">
    <property type="entry name" value="Enolase_C"/>
    <property type="match status" value="1"/>
</dbReference>
<dbReference type="SMART" id="SM01193">
    <property type="entry name" value="Enolase_N"/>
    <property type="match status" value="1"/>
</dbReference>
<dbReference type="SUPFAM" id="SSF51604">
    <property type="entry name" value="Enolase C-terminal domain-like"/>
    <property type="match status" value="1"/>
</dbReference>
<dbReference type="SUPFAM" id="SSF54826">
    <property type="entry name" value="Enolase N-terminal domain-like"/>
    <property type="match status" value="1"/>
</dbReference>
<dbReference type="PROSITE" id="PS00164">
    <property type="entry name" value="ENOLASE"/>
    <property type="match status" value="1"/>
</dbReference>
<reference key="1">
    <citation type="submission" date="2008-06" db="EMBL/GenBank/DDBJ databases">
        <title>Complete sequence of Pelodictyon phaeoclathratiforme BU-1.</title>
        <authorList>
            <consortium name="US DOE Joint Genome Institute"/>
            <person name="Lucas S."/>
            <person name="Copeland A."/>
            <person name="Lapidus A."/>
            <person name="Glavina del Rio T."/>
            <person name="Dalin E."/>
            <person name="Tice H."/>
            <person name="Bruce D."/>
            <person name="Goodwin L."/>
            <person name="Pitluck S."/>
            <person name="Schmutz J."/>
            <person name="Larimer F."/>
            <person name="Land M."/>
            <person name="Hauser L."/>
            <person name="Kyrpides N."/>
            <person name="Mikhailova N."/>
            <person name="Liu Z."/>
            <person name="Li T."/>
            <person name="Zhao F."/>
            <person name="Overmann J."/>
            <person name="Bryant D.A."/>
            <person name="Richardson P."/>
        </authorList>
    </citation>
    <scope>NUCLEOTIDE SEQUENCE [LARGE SCALE GENOMIC DNA]</scope>
    <source>
        <strain>DSM 5477 / BU-1</strain>
    </source>
</reference>
<organism>
    <name type="scientific">Pelodictyon phaeoclathratiforme (strain DSM 5477 / BU-1)</name>
    <dbReference type="NCBI Taxonomy" id="324925"/>
    <lineage>
        <taxon>Bacteria</taxon>
        <taxon>Pseudomonadati</taxon>
        <taxon>Chlorobiota</taxon>
        <taxon>Chlorobiia</taxon>
        <taxon>Chlorobiales</taxon>
        <taxon>Chlorobiaceae</taxon>
        <taxon>Chlorobium/Pelodictyon group</taxon>
        <taxon>Pelodictyon</taxon>
    </lineage>
</organism>
<protein>
    <recommendedName>
        <fullName evidence="1">Enolase</fullName>
        <ecNumber evidence="1">4.2.1.11</ecNumber>
    </recommendedName>
    <alternativeName>
        <fullName evidence="1">2-phospho-D-glycerate hydro-lyase</fullName>
    </alternativeName>
    <alternativeName>
        <fullName evidence="1">2-phosphoglycerate dehydratase</fullName>
    </alternativeName>
</protein>
<gene>
    <name evidence="1" type="primary">eno</name>
    <name type="ordered locus">Ppha_2689</name>
</gene>
<evidence type="ECO:0000255" key="1">
    <source>
        <dbReference type="HAMAP-Rule" id="MF_00318"/>
    </source>
</evidence>
<sequence length="437" mass="46908">MPIITQILARQILDSRGNPTVEVDVYTESSFGRAAVPSGASTGVHEAVELRDGDAAVYLGKGVLKAVENVNTVINDALTGMLVTEQEEIDQALLDLDGTPNKSKLGANALLGVSMACAKAGAEYSGLPLYRYIGGTMASTLPVPMMNVLNGGAHADNTVDFQEFMIMPAGFDTFSDALRCGAEIFHALKALLKSKGLSTAVGDEGGFAPNLSSNEEAIELVIEAIGKAGYKVGSPTDKGGLGDAQVMIALDPASSEFYDSAKKRYVFKKSSKRELTSLEMAEYWEKWASDYPIISIEDGMAEDDWEGWKVLTEKIGSRVQLVGDDLFVTNSKRLAEGIERGVANSILVKVNQIGTLTETLDAIDLAKRNGYTSVISHRSGETEDSTIAQIAVATNAGQIKTGSLSRSDRMAKYNELLRIEEELGDQARYPGRKAFRV</sequence>
<feature type="chain" id="PRO_1000115894" description="Enolase">
    <location>
        <begin position="1"/>
        <end position="437"/>
    </location>
</feature>
<feature type="active site" description="Proton donor" evidence="1">
    <location>
        <position position="204"/>
    </location>
</feature>
<feature type="active site" description="Proton acceptor" evidence="1">
    <location>
        <position position="349"/>
    </location>
</feature>
<feature type="binding site" evidence="1">
    <location>
        <position position="162"/>
    </location>
    <ligand>
        <name>(2R)-2-phosphoglycerate</name>
        <dbReference type="ChEBI" id="CHEBI:58289"/>
    </ligand>
</feature>
<feature type="binding site" evidence="1">
    <location>
        <position position="251"/>
    </location>
    <ligand>
        <name>Mg(2+)</name>
        <dbReference type="ChEBI" id="CHEBI:18420"/>
    </ligand>
</feature>
<feature type="binding site" evidence="1">
    <location>
        <position position="297"/>
    </location>
    <ligand>
        <name>Mg(2+)</name>
        <dbReference type="ChEBI" id="CHEBI:18420"/>
    </ligand>
</feature>
<feature type="binding site" evidence="1">
    <location>
        <position position="324"/>
    </location>
    <ligand>
        <name>Mg(2+)</name>
        <dbReference type="ChEBI" id="CHEBI:18420"/>
    </ligand>
</feature>
<feature type="binding site" evidence="1">
    <location>
        <position position="349"/>
    </location>
    <ligand>
        <name>(2R)-2-phosphoglycerate</name>
        <dbReference type="ChEBI" id="CHEBI:58289"/>
    </ligand>
</feature>
<feature type="binding site" evidence="1">
    <location>
        <position position="378"/>
    </location>
    <ligand>
        <name>(2R)-2-phosphoglycerate</name>
        <dbReference type="ChEBI" id="CHEBI:58289"/>
    </ligand>
</feature>
<feature type="binding site" evidence="1">
    <location>
        <position position="379"/>
    </location>
    <ligand>
        <name>(2R)-2-phosphoglycerate</name>
        <dbReference type="ChEBI" id="CHEBI:58289"/>
    </ligand>
</feature>
<feature type="binding site" evidence="1">
    <location>
        <position position="400"/>
    </location>
    <ligand>
        <name>(2R)-2-phosphoglycerate</name>
        <dbReference type="ChEBI" id="CHEBI:58289"/>
    </ligand>
</feature>
<comment type="function">
    <text evidence="1">Catalyzes the reversible conversion of 2-phosphoglycerate (2-PG) into phosphoenolpyruvate (PEP). It is essential for the degradation of carbohydrates via glycolysis.</text>
</comment>
<comment type="catalytic activity">
    <reaction evidence="1">
        <text>(2R)-2-phosphoglycerate = phosphoenolpyruvate + H2O</text>
        <dbReference type="Rhea" id="RHEA:10164"/>
        <dbReference type="ChEBI" id="CHEBI:15377"/>
        <dbReference type="ChEBI" id="CHEBI:58289"/>
        <dbReference type="ChEBI" id="CHEBI:58702"/>
        <dbReference type="EC" id="4.2.1.11"/>
    </reaction>
</comment>
<comment type="cofactor">
    <cofactor evidence="1">
        <name>Mg(2+)</name>
        <dbReference type="ChEBI" id="CHEBI:18420"/>
    </cofactor>
    <text evidence="1">Binds a second Mg(2+) ion via substrate during catalysis.</text>
</comment>
<comment type="pathway">
    <text evidence="1">Carbohydrate degradation; glycolysis; pyruvate from D-glyceraldehyde 3-phosphate: step 4/5.</text>
</comment>
<comment type="subcellular location">
    <subcellularLocation>
        <location evidence="1">Cytoplasm</location>
    </subcellularLocation>
    <subcellularLocation>
        <location evidence="1">Secreted</location>
    </subcellularLocation>
    <subcellularLocation>
        <location evidence="1">Cell surface</location>
    </subcellularLocation>
    <text evidence="1">Fractions of enolase are present in both the cytoplasm and on the cell surface.</text>
</comment>
<comment type="similarity">
    <text evidence="1">Belongs to the enolase family.</text>
</comment>
<keyword id="KW-0963">Cytoplasm</keyword>
<keyword id="KW-0324">Glycolysis</keyword>
<keyword id="KW-0456">Lyase</keyword>
<keyword id="KW-0460">Magnesium</keyword>
<keyword id="KW-0479">Metal-binding</keyword>
<keyword id="KW-1185">Reference proteome</keyword>
<keyword id="KW-0964">Secreted</keyword>
<accession>B4SGB2</accession>